<protein>
    <recommendedName>
        <fullName>UPF0252 protein PF0978</fullName>
    </recommendedName>
</protein>
<sequence>MRVPLLILLFLVLTSGCIAPSTPSFTQTPTCLEQEKDLNKAIKCYLEDPREIKALTNLSKSLKGPNEEWTIWNILKWEEENLKYDDNKPTNYILRPSEFLVKRKGVCTDYTVLTLGLLLTLNYSQVGFMIVHYAESTTLHSTAIANVSGTLFVLDQKLPPLDLGSYIVESGKAGKLITQGELYYVSKSNGSIIIEGPTILGANDFIRQDYKIDEQELKSIEIALKTMIAQRSKLSQVYELKYSLPRGFKERRAWILKIPRFRVIYNPIFKEQYLETIIYHILEDEEIKEHIKTATGFYLEVTTEQEDLIIKFYLAKQYIYKGHNKNRG</sequence>
<reference key="1">
    <citation type="journal article" date="1999" name="Genetics">
        <title>Divergence of the hyperthermophilic archaea Pyrococcus furiosus and P. horikoshii inferred from complete genomic sequences.</title>
        <authorList>
            <person name="Maeder D.L."/>
            <person name="Weiss R.B."/>
            <person name="Dunn D.M."/>
            <person name="Cherry J.L."/>
            <person name="Gonzalez J.M."/>
            <person name="DiRuggiero J."/>
            <person name="Robb F.T."/>
        </authorList>
    </citation>
    <scope>NUCLEOTIDE SEQUENCE [LARGE SCALE GENOMIC DNA]</scope>
    <source>
        <strain>ATCC 43587 / DSM 3638 / JCM 8422 / Vc1</strain>
    </source>
</reference>
<evidence type="ECO:0000255" key="1"/>
<evidence type="ECO:0000305" key="2"/>
<organism>
    <name type="scientific">Pyrococcus furiosus (strain ATCC 43587 / DSM 3638 / JCM 8422 / Vc1)</name>
    <dbReference type="NCBI Taxonomy" id="186497"/>
    <lineage>
        <taxon>Archaea</taxon>
        <taxon>Methanobacteriati</taxon>
        <taxon>Methanobacteriota</taxon>
        <taxon>Thermococci</taxon>
        <taxon>Thermococcales</taxon>
        <taxon>Thermococcaceae</taxon>
        <taxon>Pyrococcus</taxon>
    </lineage>
</organism>
<comment type="subcellular location">
    <subcellularLocation>
        <location evidence="2">Membrane</location>
        <topology evidence="2">Single-pass membrane protein</topology>
    </subcellularLocation>
</comment>
<comment type="similarity">
    <text evidence="2">Belongs to the UPF0252 family.</text>
</comment>
<keyword id="KW-0472">Membrane</keyword>
<keyword id="KW-1185">Reference proteome</keyword>
<keyword id="KW-0812">Transmembrane</keyword>
<keyword id="KW-1133">Transmembrane helix</keyword>
<gene>
    <name type="ordered locus">PF0978</name>
</gene>
<dbReference type="EMBL" id="AE009950">
    <property type="protein sequence ID" value="AAL81102.1"/>
    <property type="molecule type" value="Genomic_DNA"/>
</dbReference>
<dbReference type="RefSeq" id="WP_011012115.1">
    <property type="nucleotide sequence ID" value="NC_003413.1"/>
</dbReference>
<dbReference type="SMR" id="Q8U271"/>
<dbReference type="STRING" id="186497.PF0978"/>
<dbReference type="PaxDb" id="186497-PF0978"/>
<dbReference type="GeneID" id="1468843"/>
<dbReference type="KEGG" id="pfu:PF0978"/>
<dbReference type="PATRIC" id="fig|186497.12.peg.1037"/>
<dbReference type="eggNOG" id="arCOG02164">
    <property type="taxonomic scope" value="Archaea"/>
</dbReference>
<dbReference type="HOGENOM" id="CLU_045499_0_0_2"/>
<dbReference type="OrthoDB" id="86147at2157"/>
<dbReference type="PhylomeDB" id="Q8U271"/>
<dbReference type="Proteomes" id="UP000001013">
    <property type="component" value="Chromosome"/>
</dbReference>
<dbReference type="GO" id="GO:0016020">
    <property type="term" value="C:membrane"/>
    <property type="evidence" value="ECO:0007669"/>
    <property type="project" value="UniProtKB-SubCell"/>
</dbReference>
<dbReference type="Gene3D" id="3.10.620.30">
    <property type="match status" value="1"/>
</dbReference>
<dbReference type="InterPro" id="IPR038765">
    <property type="entry name" value="Papain-like_cys_pep_sf"/>
</dbReference>
<dbReference type="InterPro" id="IPR007562">
    <property type="entry name" value="Transglutaminase-like_domain"/>
</dbReference>
<dbReference type="Pfam" id="PF04473">
    <property type="entry name" value="DUF553"/>
    <property type="match status" value="1"/>
</dbReference>
<dbReference type="SUPFAM" id="SSF54001">
    <property type="entry name" value="Cysteine proteinases"/>
    <property type="match status" value="1"/>
</dbReference>
<proteinExistence type="inferred from homology"/>
<name>Y978_PYRFU</name>
<accession>Q8U271</accession>
<feature type="chain" id="PRO_0000159558" description="UPF0252 protein PF0978">
    <location>
        <begin position="1"/>
        <end position="328"/>
    </location>
</feature>
<feature type="transmembrane region" description="Helical" evidence="1">
    <location>
        <begin position="3"/>
        <end position="23"/>
    </location>
</feature>